<accession>Q12ZI9</accession>
<reference key="1">
    <citation type="journal article" date="2009" name="ISME J.">
        <title>The genome sequence of the psychrophilic archaeon, Methanococcoides burtonii: the role of genome evolution in cold adaptation.</title>
        <authorList>
            <person name="Allen M.A."/>
            <person name="Lauro F.M."/>
            <person name="Williams T.J."/>
            <person name="Burg D."/>
            <person name="Siddiqui K.S."/>
            <person name="De Francisci D."/>
            <person name="Chong K.W."/>
            <person name="Pilak O."/>
            <person name="Chew H.H."/>
            <person name="De Maere M.Z."/>
            <person name="Ting L."/>
            <person name="Katrib M."/>
            <person name="Ng C."/>
            <person name="Sowers K.R."/>
            <person name="Galperin M.Y."/>
            <person name="Anderson I.J."/>
            <person name="Ivanova N."/>
            <person name="Dalin E."/>
            <person name="Martinez M."/>
            <person name="Lapidus A."/>
            <person name="Hauser L."/>
            <person name="Land M."/>
            <person name="Thomas T."/>
            <person name="Cavicchioli R."/>
        </authorList>
    </citation>
    <scope>NUCLEOTIDE SEQUENCE [LARGE SCALE GENOMIC DNA]</scope>
    <source>
        <strain>DSM 6242 / NBRC 107633 / OCM 468 / ACE-M</strain>
    </source>
</reference>
<comment type="function">
    <text evidence="1">Plays an important role in the de novo pathway of purine nucleotide biosynthesis. Catalyzes the first committed step in the biosynthesis of AMP from IMP.</text>
</comment>
<comment type="catalytic activity">
    <reaction evidence="1">
        <text>IMP + L-aspartate + GTP = N(6)-(1,2-dicarboxyethyl)-AMP + GDP + phosphate + 2 H(+)</text>
        <dbReference type="Rhea" id="RHEA:15753"/>
        <dbReference type="ChEBI" id="CHEBI:15378"/>
        <dbReference type="ChEBI" id="CHEBI:29991"/>
        <dbReference type="ChEBI" id="CHEBI:37565"/>
        <dbReference type="ChEBI" id="CHEBI:43474"/>
        <dbReference type="ChEBI" id="CHEBI:57567"/>
        <dbReference type="ChEBI" id="CHEBI:58053"/>
        <dbReference type="ChEBI" id="CHEBI:58189"/>
        <dbReference type="EC" id="6.3.4.4"/>
    </reaction>
</comment>
<comment type="cofactor">
    <cofactor evidence="1">
        <name>Mg(2+)</name>
        <dbReference type="ChEBI" id="CHEBI:18420"/>
    </cofactor>
    <text evidence="1">Binds 1 Mg(2+) ion per subunit.</text>
</comment>
<comment type="pathway">
    <text evidence="1">Purine metabolism; AMP biosynthesis via de novo pathway; AMP from IMP: step 1/2.</text>
</comment>
<comment type="subunit">
    <text evidence="1">Homodimer.</text>
</comment>
<comment type="subcellular location">
    <subcellularLocation>
        <location evidence="1">Cytoplasm</location>
    </subcellularLocation>
</comment>
<comment type="similarity">
    <text evidence="1">Belongs to the adenylosuccinate synthetase family.</text>
</comment>
<gene>
    <name evidence="1" type="primary">purA</name>
    <name type="ordered locus">Mbur_0119</name>
</gene>
<feature type="chain" id="PRO_1000000856" description="Adenylosuccinate synthetase">
    <location>
        <begin position="1"/>
        <end position="423"/>
    </location>
</feature>
<feature type="active site" description="Proton acceptor" evidence="1">
    <location>
        <position position="12"/>
    </location>
</feature>
<feature type="active site" description="Proton donor" evidence="1">
    <location>
        <position position="40"/>
    </location>
</feature>
<feature type="binding site" evidence="1">
    <location>
        <begin position="11"/>
        <end position="17"/>
    </location>
    <ligand>
        <name>GTP</name>
        <dbReference type="ChEBI" id="CHEBI:37565"/>
    </ligand>
</feature>
<feature type="binding site" description="in other chain" evidence="1">
    <location>
        <begin position="12"/>
        <end position="15"/>
    </location>
    <ligand>
        <name>IMP</name>
        <dbReference type="ChEBI" id="CHEBI:58053"/>
        <note>ligand shared between dimeric partners</note>
    </ligand>
</feature>
<feature type="binding site" evidence="1">
    <location>
        <position position="12"/>
    </location>
    <ligand>
        <name>Mg(2+)</name>
        <dbReference type="ChEBI" id="CHEBI:18420"/>
    </ligand>
</feature>
<feature type="binding site" description="in other chain" evidence="1">
    <location>
        <begin position="37"/>
        <end position="40"/>
    </location>
    <ligand>
        <name>IMP</name>
        <dbReference type="ChEBI" id="CHEBI:58053"/>
        <note>ligand shared between dimeric partners</note>
    </ligand>
</feature>
<feature type="binding site" evidence="1">
    <location>
        <begin position="39"/>
        <end position="41"/>
    </location>
    <ligand>
        <name>GTP</name>
        <dbReference type="ChEBI" id="CHEBI:37565"/>
    </ligand>
</feature>
<feature type="binding site" evidence="1">
    <location>
        <position position="39"/>
    </location>
    <ligand>
        <name>Mg(2+)</name>
        <dbReference type="ChEBI" id="CHEBI:18420"/>
    </ligand>
</feature>
<feature type="binding site" description="in other chain" evidence="1">
    <location>
        <position position="127"/>
    </location>
    <ligand>
        <name>IMP</name>
        <dbReference type="ChEBI" id="CHEBI:58053"/>
        <note>ligand shared between dimeric partners</note>
    </ligand>
</feature>
<feature type="binding site" evidence="1">
    <location>
        <position position="141"/>
    </location>
    <ligand>
        <name>IMP</name>
        <dbReference type="ChEBI" id="CHEBI:58053"/>
        <note>ligand shared between dimeric partners</note>
    </ligand>
</feature>
<feature type="binding site" description="in other chain" evidence="1">
    <location>
        <position position="223"/>
    </location>
    <ligand>
        <name>IMP</name>
        <dbReference type="ChEBI" id="CHEBI:58053"/>
        <note>ligand shared between dimeric partners</note>
    </ligand>
</feature>
<feature type="binding site" description="in other chain" evidence="1">
    <location>
        <position position="238"/>
    </location>
    <ligand>
        <name>IMP</name>
        <dbReference type="ChEBI" id="CHEBI:58053"/>
        <note>ligand shared between dimeric partners</note>
    </ligand>
</feature>
<feature type="binding site" evidence="1">
    <location>
        <begin position="298"/>
        <end position="304"/>
    </location>
    <ligand>
        <name>substrate</name>
    </ligand>
</feature>
<feature type="binding site" description="in other chain" evidence="1">
    <location>
        <position position="302"/>
    </location>
    <ligand>
        <name>IMP</name>
        <dbReference type="ChEBI" id="CHEBI:58053"/>
        <note>ligand shared between dimeric partners</note>
    </ligand>
</feature>
<feature type="binding site" evidence="1">
    <location>
        <position position="304"/>
    </location>
    <ligand>
        <name>GTP</name>
        <dbReference type="ChEBI" id="CHEBI:37565"/>
    </ligand>
</feature>
<feature type="binding site" evidence="1">
    <location>
        <begin position="330"/>
        <end position="332"/>
    </location>
    <ligand>
        <name>GTP</name>
        <dbReference type="ChEBI" id="CHEBI:37565"/>
    </ligand>
</feature>
<feature type="binding site" evidence="1">
    <location>
        <begin position="412"/>
        <end position="414"/>
    </location>
    <ligand>
        <name>GTP</name>
        <dbReference type="ChEBI" id="CHEBI:37565"/>
    </ligand>
</feature>
<organism>
    <name type="scientific">Methanococcoides burtonii (strain DSM 6242 / NBRC 107633 / OCM 468 / ACE-M)</name>
    <dbReference type="NCBI Taxonomy" id="259564"/>
    <lineage>
        <taxon>Archaea</taxon>
        <taxon>Methanobacteriati</taxon>
        <taxon>Methanobacteriota</taxon>
        <taxon>Stenosarchaea group</taxon>
        <taxon>Methanomicrobia</taxon>
        <taxon>Methanosarcinales</taxon>
        <taxon>Methanosarcinaceae</taxon>
        <taxon>Methanococcoides</taxon>
    </lineage>
</organism>
<keyword id="KW-0963">Cytoplasm</keyword>
<keyword id="KW-0342">GTP-binding</keyword>
<keyword id="KW-0436">Ligase</keyword>
<keyword id="KW-0460">Magnesium</keyword>
<keyword id="KW-0479">Metal-binding</keyword>
<keyword id="KW-0547">Nucleotide-binding</keyword>
<keyword id="KW-0658">Purine biosynthesis</keyword>
<name>PURA_METBU</name>
<sequence>MFTILTGSQFGDEGKGKIVDLLSKDYDLVVRFQGGDNAGHTVVVGDDVYKLHLIPSGFLLDSRVLIGPGTVLNPEVLAEEIDMLEKTGVEVSSDKLGIDAKTSIIMPYHVELDSLRESLRKEKIGTTKKGIGFAYVDKIARDEVRMSDLVDSEILMNRLTEMAASKEAAIRELGGDPSIVTDSELMDKYVKLGQRLAPYVTDVSYEINKAISEGKNVLAEGAQGTFLDVIHGTQKFVTSSSTIAGSACANLGVGPTKVDEVLGIVKAYITRVGEGPLPTELHDEAGAHLHDVGHEFGTTTGRSRRCGWFDLPLLKKAINLNGYTSVALTKLDVLSDLDVVKVCVAYDLNGERLDYPPEDTSLLSMCKPIYDELEGWSDDLTGVKRYEDIARAAHDYVEKLEGMMGVPIKYVSVGPGREQTFEK</sequence>
<dbReference type="EC" id="6.3.4.4" evidence="1"/>
<dbReference type="EMBL" id="CP000300">
    <property type="protein sequence ID" value="ABE51137.1"/>
    <property type="molecule type" value="Genomic_DNA"/>
</dbReference>
<dbReference type="RefSeq" id="WP_011498301.1">
    <property type="nucleotide sequence ID" value="NC_007955.1"/>
</dbReference>
<dbReference type="SMR" id="Q12ZI9"/>
<dbReference type="STRING" id="259564.Mbur_0119"/>
<dbReference type="GeneID" id="3998228"/>
<dbReference type="KEGG" id="mbu:Mbur_0119"/>
<dbReference type="HOGENOM" id="CLU_029848_0_0_2"/>
<dbReference type="OrthoDB" id="372247at2157"/>
<dbReference type="UniPathway" id="UPA00075">
    <property type="reaction ID" value="UER00335"/>
</dbReference>
<dbReference type="Proteomes" id="UP000001979">
    <property type="component" value="Chromosome"/>
</dbReference>
<dbReference type="GO" id="GO:0005737">
    <property type="term" value="C:cytoplasm"/>
    <property type="evidence" value="ECO:0007669"/>
    <property type="project" value="UniProtKB-SubCell"/>
</dbReference>
<dbReference type="GO" id="GO:0004019">
    <property type="term" value="F:adenylosuccinate synthase activity"/>
    <property type="evidence" value="ECO:0007669"/>
    <property type="project" value="UniProtKB-UniRule"/>
</dbReference>
<dbReference type="GO" id="GO:0005525">
    <property type="term" value="F:GTP binding"/>
    <property type="evidence" value="ECO:0007669"/>
    <property type="project" value="UniProtKB-UniRule"/>
</dbReference>
<dbReference type="GO" id="GO:0000287">
    <property type="term" value="F:magnesium ion binding"/>
    <property type="evidence" value="ECO:0007669"/>
    <property type="project" value="UniProtKB-UniRule"/>
</dbReference>
<dbReference type="GO" id="GO:0044208">
    <property type="term" value="P:'de novo' AMP biosynthetic process"/>
    <property type="evidence" value="ECO:0007669"/>
    <property type="project" value="UniProtKB-UniRule"/>
</dbReference>
<dbReference type="GO" id="GO:0046040">
    <property type="term" value="P:IMP metabolic process"/>
    <property type="evidence" value="ECO:0007669"/>
    <property type="project" value="TreeGrafter"/>
</dbReference>
<dbReference type="CDD" id="cd03108">
    <property type="entry name" value="AdSS"/>
    <property type="match status" value="1"/>
</dbReference>
<dbReference type="FunFam" id="1.10.300.10:FF:000001">
    <property type="entry name" value="Adenylosuccinate synthetase"/>
    <property type="match status" value="1"/>
</dbReference>
<dbReference type="FunFam" id="3.90.170.10:FF:000001">
    <property type="entry name" value="Adenylosuccinate synthetase"/>
    <property type="match status" value="1"/>
</dbReference>
<dbReference type="Gene3D" id="3.40.440.10">
    <property type="entry name" value="Adenylosuccinate Synthetase, subunit A, domain 1"/>
    <property type="match status" value="1"/>
</dbReference>
<dbReference type="Gene3D" id="1.10.300.10">
    <property type="entry name" value="Adenylosuccinate Synthetase, subunit A, domain 2"/>
    <property type="match status" value="1"/>
</dbReference>
<dbReference type="Gene3D" id="3.90.170.10">
    <property type="entry name" value="Adenylosuccinate Synthetase, subunit A, domain 3"/>
    <property type="match status" value="1"/>
</dbReference>
<dbReference type="HAMAP" id="MF_00011">
    <property type="entry name" value="Adenylosucc_synth"/>
    <property type="match status" value="1"/>
</dbReference>
<dbReference type="InterPro" id="IPR018220">
    <property type="entry name" value="Adenylosuccin_syn_GTP-bd"/>
</dbReference>
<dbReference type="InterPro" id="IPR042109">
    <property type="entry name" value="Adenylosuccinate_synth_dom1"/>
</dbReference>
<dbReference type="InterPro" id="IPR042110">
    <property type="entry name" value="Adenylosuccinate_synth_dom2"/>
</dbReference>
<dbReference type="InterPro" id="IPR042111">
    <property type="entry name" value="Adenylosuccinate_synth_dom3"/>
</dbReference>
<dbReference type="InterPro" id="IPR001114">
    <property type="entry name" value="Adenylosuccinate_synthetase"/>
</dbReference>
<dbReference type="InterPro" id="IPR027417">
    <property type="entry name" value="P-loop_NTPase"/>
</dbReference>
<dbReference type="NCBIfam" id="NF002223">
    <property type="entry name" value="PRK01117.1"/>
    <property type="match status" value="1"/>
</dbReference>
<dbReference type="NCBIfam" id="TIGR00184">
    <property type="entry name" value="purA"/>
    <property type="match status" value="1"/>
</dbReference>
<dbReference type="PANTHER" id="PTHR11846">
    <property type="entry name" value="ADENYLOSUCCINATE SYNTHETASE"/>
    <property type="match status" value="1"/>
</dbReference>
<dbReference type="PANTHER" id="PTHR11846:SF0">
    <property type="entry name" value="ADENYLOSUCCINATE SYNTHETASE"/>
    <property type="match status" value="1"/>
</dbReference>
<dbReference type="Pfam" id="PF00709">
    <property type="entry name" value="Adenylsucc_synt"/>
    <property type="match status" value="1"/>
</dbReference>
<dbReference type="SMART" id="SM00788">
    <property type="entry name" value="Adenylsucc_synt"/>
    <property type="match status" value="1"/>
</dbReference>
<dbReference type="SUPFAM" id="SSF52540">
    <property type="entry name" value="P-loop containing nucleoside triphosphate hydrolases"/>
    <property type="match status" value="1"/>
</dbReference>
<dbReference type="PROSITE" id="PS01266">
    <property type="entry name" value="ADENYLOSUCCIN_SYN_1"/>
    <property type="match status" value="1"/>
</dbReference>
<protein>
    <recommendedName>
        <fullName evidence="1">Adenylosuccinate synthetase</fullName>
        <shortName evidence="1">AMPSase</shortName>
        <shortName evidence="1">AdSS</shortName>
        <ecNumber evidence="1">6.3.4.4</ecNumber>
    </recommendedName>
    <alternativeName>
        <fullName evidence="1">IMP--aspartate ligase</fullName>
    </alternativeName>
</protein>
<evidence type="ECO:0000255" key="1">
    <source>
        <dbReference type="HAMAP-Rule" id="MF_00011"/>
    </source>
</evidence>
<proteinExistence type="inferred from homology"/>